<name>PYC1_SYNP6</name>
<accession>P06114</accession>
<feature type="chain" id="PRO_0000199239" description="Phycobilisome 7.8 kDa linker polypeptide, allophycocyanin-associated, core">
    <location>
        <begin position="1"/>
        <end position="67"/>
    </location>
</feature>
<feature type="domain" description="CpcD-like" evidence="2">
    <location>
        <begin position="1"/>
        <end position="56"/>
    </location>
</feature>
<keyword id="KW-0042">Antenna complex</keyword>
<keyword id="KW-0472">Membrane</keyword>
<keyword id="KW-0602">Photosynthesis</keyword>
<keyword id="KW-0605">Phycobilisome</keyword>
<keyword id="KW-0793">Thylakoid</keyword>
<proteinExistence type="inferred from homology"/>
<gene>
    <name type="primary">apcC</name>
    <name type="ordered locus">syc1188_d</name>
</gene>
<reference key="1">
    <citation type="journal article" date="1986" name="Mol. Gen. Genet.">
        <title>Organization and nucleotide sequence of genes encoding core components of the phycobilisomes from Synechococcus 6301.</title>
        <authorList>
            <person name="Houmard J."/>
            <person name="Mazel D."/>
            <person name="Moguet C."/>
            <person name="Bryant D.A."/>
            <person name="Tandeau de Marsac N."/>
        </authorList>
    </citation>
    <scope>NUCLEOTIDE SEQUENCE [GENOMIC DNA]</scope>
</reference>
<reference key="2">
    <citation type="submission" date="1998-07" db="EMBL/GenBank/DDBJ databases">
        <title>Genes required for c-type cytochrome biogenesis.</title>
        <authorList>
            <person name="Inoue K."/>
            <person name="Bryant D.A."/>
        </authorList>
    </citation>
    <scope>NUCLEOTIDE SEQUENCE [GENOMIC DNA]</scope>
</reference>
<reference key="3">
    <citation type="journal article" date="2007" name="Photosyn. Res.">
        <title>Complete nucleotide sequence of the freshwater unicellular cyanobacterium Synechococcus elongatus PCC 6301 chromosome: gene content and organization.</title>
        <authorList>
            <person name="Sugita C."/>
            <person name="Ogata K."/>
            <person name="Shikata M."/>
            <person name="Jikuya H."/>
            <person name="Takano J."/>
            <person name="Furumichi M."/>
            <person name="Kanehisa M."/>
            <person name="Omata T."/>
            <person name="Sugiura M."/>
            <person name="Sugita M."/>
        </authorList>
    </citation>
    <scope>NUCLEOTIDE SEQUENCE [LARGE SCALE GENOMIC DNA]</scope>
    <source>
        <strain>ATCC 27144 / PCC 6301 / SAUG 1402/1</strain>
    </source>
</reference>
<protein>
    <recommendedName>
        <fullName>Phycobilisome 7.8 kDa linker polypeptide, allophycocyanin-associated, core</fullName>
    </recommendedName>
    <alternativeName>
        <fullName>LC 7.8</fullName>
    </alternativeName>
</protein>
<organism>
    <name type="scientific">Synechococcus sp. (strain ATCC 27144 / PCC 6301 / SAUG 1402/1)</name>
    <name type="common">Anacystis nidulans</name>
    <dbReference type="NCBI Taxonomy" id="269084"/>
    <lineage>
        <taxon>Bacteria</taxon>
        <taxon>Bacillati</taxon>
        <taxon>Cyanobacteriota</taxon>
        <taxon>Cyanophyceae</taxon>
        <taxon>Synechococcales</taxon>
        <taxon>Synechococcaceae</taxon>
        <taxon>Synechococcus</taxon>
    </lineage>
</organism>
<comment type="function">
    <text evidence="1">Rod linker protein, associated with allophycocyanin. Linker polypeptides determine the state of aggregation and the location of the disk-shaped phycobiliprotein units within the phycobilisome and modulate their spectroscopic properties in order to mediate a directed and optimal energy transfer (By similarity).</text>
</comment>
<comment type="subcellular location">
    <subcellularLocation>
        <location evidence="1">Cellular thylakoid membrane</location>
        <topology evidence="1">Peripheral membrane protein</topology>
        <orientation evidence="1">Cytoplasmic side</orientation>
    </subcellularLocation>
    <text evidence="3">This protein occurs in the rod, it is associated with allophycocyanin.</text>
</comment>
<comment type="similarity">
    <text evidence="3">Belongs to the phycobilisome linker protein family.</text>
</comment>
<evidence type="ECO:0000250" key="1"/>
<evidence type="ECO:0000255" key="2">
    <source>
        <dbReference type="PROSITE-ProRule" id="PRU00771"/>
    </source>
</evidence>
<evidence type="ECO:0000305" key="3"/>
<dbReference type="EMBL" id="X04716">
    <property type="protein sequence ID" value="CAA28423.1"/>
    <property type="molecule type" value="Genomic_DNA"/>
</dbReference>
<dbReference type="EMBL" id="AF079137">
    <property type="protein sequence ID" value="AAF04329.1"/>
    <property type="molecule type" value="Genomic_DNA"/>
</dbReference>
<dbReference type="EMBL" id="AP008231">
    <property type="protein sequence ID" value="BAD79378.1"/>
    <property type="molecule type" value="Genomic_DNA"/>
</dbReference>
<dbReference type="SMR" id="P06114"/>
<dbReference type="KEGG" id="syc:syc1188_d"/>
<dbReference type="eggNOG" id="ENOG5032S63">
    <property type="taxonomic scope" value="Bacteria"/>
</dbReference>
<dbReference type="Proteomes" id="UP000001175">
    <property type="component" value="Chromosome"/>
</dbReference>
<dbReference type="GO" id="GO:0030089">
    <property type="term" value="C:phycobilisome"/>
    <property type="evidence" value="ECO:0007669"/>
    <property type="project" value="UniProtKB-KW"/>
</dbReference>
<dbReference type="GO" id="GO:0031676">
    <property type="term" value="C:plasma membrane-derived thylakoid membrane"/>
    <property type="evidence" value="ECO:0007669"/>
    <property type="project" value="UniProtKB-SubCell"/>
</dbReference>
<dbReference type="GO" id="GO:0015979">
    <property type="term" value="P:photosynthesis"/>
    <property type="evidence" value="ECO:0007669"/>
    <property type="project" value="UniProtKB-KW"/>
</dbReference>
<dbReference type="Gene3D" id="3.30.1490.170">
    <property type="entry name" value="Allophycocyanin linker chain (domain)"/>
    <property type="match status" value="1"/>
</dbReference>
<dbReference type="InterPro" id="IPR011134">
    <property type="entry name" value="Allophyco_linker"/>
</dbReference>
<dbReference type="InterPro" id="IPR011064">
    <property type="entry name" value="Allophyco_linker_chain"/>
</dbReference>
<dbReference type="InterPro" id="IPR008213">
    <property type="entry name" value="CpcD-like_dom"/>
</dbReference>
<dbReference type="Pfam" id="PF01383">
    <property type="entry name" value="CpcD"/>
    <property type="match status" value="1"/>
</dbReference>
<dbReference type="PIRSF" id="PIRSF000083">
    <property type="entry name" value="Allophyco_linker"/>
    <property type="match status" value="1"/>
</dbReference>
<dbReference type="SMART" id="SM01094">
    <property type="entry name" value="CpcD"/>
    <property type="match status" value="1"/>
</dbReference>
<dbReference type="SUPFAM" id="SSF54580">
    <property type="entry name" value="Allophycocyanin linker chain (domain)"/>
    <property type="match status" value="1"/>
</dbReference>
<dbReference type="PROSITE" id="PS51441">
    <property type="entry name" value="CPCD_LIKE"/>
    <property type="match status" value="1"/>
</dbReference>
<sequence>MRMFRITACLPSPSKIRTQRELQNTFFTKLVPYDAWFREQQRIQKLGGKIIKVELATGRPNTNTGLL</sequence>